<reference key="1">
    <citation type="journal article" date="2004" name="Nature">
        <title>Genome evolution in yeasts.</title>
        <authorList>
            <person name="Dujon B."/>
            <person name="Sherman D."/>
            <person name="Fischer G."/>
            <person name="Durrens P."/>
            <person name="Casaregola S."/>
            <person name="Lafontaine I."/>
            <person name="de Montigny J."/>
            <person name="Marck C."/>
            <person name="Neuveglise C."/>
            <person name="Talla E."/>
            <person name="Goffard N."/>
            <person name="Frangeul L."/>
            <person name="Aigle M."/>
            <person name="Anthouard V."/>
            <person name="Babour A."/>
            <person name="Barbe V."/>
            <person name="Barnay S."/>
            <person name="Blanchin S."/>
            <person name="Beckerich J.-M."/>
            <person name="Beyne E."/>
            <person name="Bleykasten C."/>
            <person name="Boisrame A."/>
            <person name="Boyer J."/>
            <person name="Cattolico L."/>
            <person name="Confanioleri F."/>
            <person name="de Daruvar A."/>
            <person name="Despons L."/>
            <person name="Fabre E."/>
            <person name="Fairhead C."/>
            <person name="Ferry-Dumazet H."/>
            <person name="Groppi A."/>
            <person name="Hantraye F."/>
            <person name="Hennequin C."/>
            <person name="Jauniaux N."/>
            <person name="Joyet P."/>
            <person name="Kachouri R."/>
            <person name="Kerrest A."/>
            <person name="Koszul R."/>
            <person name="Lemaire M."/>
            <person name="Lesur I."/>
            <person name="Ma L."/>
            <person name="Muller H."/>
            <person name="Nicaud J.-M."/>
            <person name="Nikolski M."/>
            <person name="Oztas S."/>
            <person name="Ozier-Kalogeropoulos O."/>
            <person name="Pellenz S."/>
            <person name="Potier S."/>
            <person name="Richard G.-F."/>
            <person name="Straub M.-L."/>
            <person name="Suleau A."/>
            <person name="Swennen D."/>
            <person name="Tekaia F."/>
            <person name="Wesolowski-Louvel M."/>
            <person name="Westhof E."/>
            <person name="Wirth B."/>
            <person name="Zeniou-Meyer M."/>
            <person name="Zivanovic Y."/>
            <person name="Bolotin-Fukuhara M."/>
            <person name="Thierry A."/>
            <person name="Bouchier C."/>
            <person name="Caudron B."/>
            <person name="Scarpelli C."/>
            <person name="Gaillardin C."/>
            <person name="Weissenbach J."/>
            <person name="Wincker P."/>
            <person name="Souciet J.-L."/>
        </authorList>
    </citation>
    <scope>NUCLEOTIDE SEQUENCE [LARGE SCALE GENOMIC DNA]</scope>
    <source>
        <strain>ATCC 8585 / CBS 2359 / DSM 70799 / NBRC 1267 / NRRL Y-1140 / WM37</strain>
    </source>
</reference>
<feature type="transit peptide" description="Mitochondrion" evidence="1">
    <location>
        <begin position="1"/>
        <end position="15"/>
    </location>
</feature>
<feature type="chain" id="PRO_0000026797" description="Cytochrome b-c1 complex subunit 2, mitochondrial">
    <location>
        <begin position="16"/>
        <end position="360"/>
    </location>
</feature>
<sequence length="360" mass="39248">MLSSRLQFAQQTARKFSISAKDGSGKLSTLAVKVHGGSRYADKEGIAHLLSRFNFHNTGNKSALRLVRESELLGGKFESSVDREYITLKATFLKEDLPYFVNALGNVLYKTSFRPHELPESVLPAAKYDISVSETNPINKAEDLLYNVSFRKDLGNTVLYRGVEKVTLDDIKAYANKVYTKENIEIVGQGVNEADLKRFVNDSLIGSLPTGSKLAAQAQPKFFSGEARLSAPGASVAAIAVPVTKEQFATYEVLAKYLTSALSELSPLIDSAKLDKYANAGLFSLYVKGEDASVVAENIKKVVDTLKKDVDISAAKEYTALQLSLENAPIDVSNVKNVKLDKFSYAAVGNVAKLPFADEL</sequence>
<organism>
    <name type="scientific">Kluyveromyces lactis (strain ATCC 8585 / CBS 2359 / DSM 70799 / NBRC 1267 / NRRL Y-1140 / WM37)</name>
    <name type="common">Yeast</name>
    <name type="synonym">Candida sphaerica</name>
    <dbReference type="NCBI Taxonomy" id="284590"/>
    <lineage>
        <taxon>Eukaryota</taxon>
        <taxon>Fungi</taxon>
        <taxon>Dikarya</taxon>
        <taxon>Ascomycota</taxon>
        <taxon>Saccharomycotina</taxon>
        <taxon>Saccharomycetes</taxon>
        <taxon>Saccharomycetales</taxon>
        <taxon>Saccharomycetaceae</taxon>
        <taxon>Kluyveromyces</taxon>
    </lineage>
</organism>
<protein>
    <recommendedName>
        <fullName>Cytochrome b-c1 complex subunit 2, mitochondrial</fullName>
    </recommendedName>
    <alternativeName>
        <fullName>Complex III subunit 2</fullName>
    </alternativeName>
    <alternativeName>
        <fullName>Core protein II</fullName>
    </alternativeName>
    <alternativeName>
        <fullName>Ubiquinol-cytochrome-c reductase complex core protein 2</fullName>
    </alternativeName>
</protein>
<accession>Q6CWJ6</accession>
<name>QCR2_KLULA</name>
<proteinExistence type="inferred from homology"/>
<keyword id="KW-0249">Electron transport</keyword>
<keyword id="KW-0472">Membrane</keyword>
<keyword id="KW-0496">Mitochondrion</keyword>
<keyword id="KW-0999">Mitochondrion inner membrane</keyword>
<keyword id="KW-1185">Reference proteome</keyword>
<keyword id="KW-0679">Respiratory chain</keyword>
<keyword id="KW-0809">Transit peptide</keyword>
<keyword id="KW-0813">Transport</keyword>
<comment type="function">
    <text evidence="2">Component of the ubiquinol-cytochrome c oxidoreductase, a multisubunit transmembrane complex that is part of the mitochondrial electron transport chain which drives oxidative phosphorylation. The respiratory chain contains 3 multisubunit complexes succinate dehydrogenase (complex II, CII), ubiquinol-cytochrome c oxidoreductase (cytochrome b-c1 complex, complex III, CIII) and cytochrome c oxidase (complex IV, CIV), that cooperate to transfer electrons derived from NADH and succinate to molecular oxygen, creating an electrochemical gradient over the inner membrane that drives transmembrane transport and the ATP synthase. The cytochrome b-c1 complex catalyzes electron transfer from ubiquinol to cytochrome c, linking this redox reaction to translocation of protons across the mitochondrial inner membrane, with protons being carried across the membrane as hydrogens on the quinol. In the process called Q cycle, 2 protons are consumed from the matrix, 4 protons are released into the intermembrane space and 2 electrons are passed to cytochrome c.</text>
</comment>
<comment type="subunit">
    <text evidence="2">Component of the ubiquinol-cytochrome c oxidoreductase (cytochrome b-c1 complex, complex III, CIII), a multisubunit enzyme composed of 3 respiratory subunits cytochrome b, cytochrome c1 and Rieske protein, 2 core protein subunits, and additional low-molecular weight protein subunits. The complex exists as an obligatory dimer and forms supercomplexes (SCs) in the inner mitochondrial membrane with cytochrome c oxidase (complex IV, CIV).</text>
</comment>
<comment type="subcellular location">
    <subcellularLocation>
        <location evidence="2">Mitochondrion inner membrane</location>
        <topology evidence="2">Peripheral membrane protein</topology>
        <orientation evidence="2">Matrix side</orientation>
    </subcellularLocation>
</comment>
<comment type="similarity">
    <text evidence="3">Belongs to the peptidase M16 family. UQCRC2/QCR2 subfamily.</text>
</comment>
<comment type="caution">
    <text evidence="3">Does not seem to have protease activity as it lacks the zinc-binding site.</text>
</comment>
<dbReference type="EMBL" id="CR382122">
    <property type="protein sequence ID" value="CAH02086.1"/>
    <property type="molecule type" value="Genomic_DNA"/>
</dbReference>
<dbReference type="RefSeq" id="XP_451693.1">
    <property type="nucleotide sequence ID" value="XM_451693.1"/>
</dbReference>
<dbReference type="SMR" id="Q6CWJ6"/>
<dbReference type="FunCoup" id="Q6CWJ6">
    <property type="interactions" value="340"/>
</dbReference>
<dbReference type="STRING" id="284590.Q6CWJ6"/>
<dbReference type="PaxDb" id="284590-Q6CWJ6"/>
<dbReference type="KEGG" id="kla:KLLA0_B03564g"/>
<dbReference type="eggNOG" id="KOG2583">
    <property type="taxonomic scope" value="Eukaryota"/>
</dbReference>
<dbReference type="HOGENOM" id="CLU_009902_0_1_1"/>
<dbReference type="InParanoid" id="Q6CWJ6"/>
<dbReference type="OMA" id="YKYQDAG"/>
<dbReference type="Proteomes" id="UP000000598">
    <property type="component" value="Chromosome B"/>
</dbReference>
<dbReference type="GO" id="GO:0005743">
    <property type="term" value="C:mitochondrial inner membrane"/>
    <property type="evidence" value="ECO:0007669"/>
    <property type="project" value="UniProtKB-SubCell"/>
</dbReference>
<dbReference type="GO" id="GO:0046872">
    <property type="term" value="F:metal ion binding"/>
    <property type="evidence" value="ECO:0007669"/>
    <property type="project" value="InterPro"/>
</dbReference>
<dbReference type="FunFam" id="3.30.830.10:FF:000021">
    <property type="entry name" value="Cytochrome b-c1 complex subunit 2"/>
    <property type="match status" value="1"/>
</dbReference>
<dbReference type="Gene3D" id="3.30.830.10">
    <property type="entry name" value="Metalloenzyme, LuxS/M16 peptidase-like"/>
    <property type="match status" value="2"/>
</dbReference>
<dbReference type="InterPro" id="IPR011249">
    <property type="entry name" value="Metalloenz_LuxS/M16"/>
</dbReference>
<dbReference type="InterPro" id="IPR050361">
    <property type="entry name" value="MPP/UQCRC_Complex"/>
</dbReference>
<dbReference type="InterPro" id="IPR011765">
    <property type="entry name" value="Pept_M16_N"/>
</dbReference>
<dbReference type="InterPro" id="IPR007863">
    <property type="entry name" value="Peptidase_M16_C"/>
</dbReference>
<dbReference type="PANTHER" id="PTHR11851:SF209">
    <property type="entry name" value="CYTOCHROME B-C1 COMPLEX SUBUNIT 2, MITOCHONDRIAL"/>
    <property type="match status" value="1"/>
</dbReference>
<dbReference type="PANTHER" id="PTHR11851">
    <property type="entry name" value="METALLOPROTEASE"/>
    <property type="match status" value="1"/>
</dbReference>
<dbReference type="Pfam" id="PF00675">
    <property type="entry name" value="Peptidase_M16"/>
    <property type="match status" value="1"/>
</dbReference>
<dbReference type="Pfam" id="PF05193">
    <property type="entry name" value="Peptidase_M16_C"/>
    <property type="match status" value="1"/>
</dbReference>
<dbReference type="SUPFAM" id="SSF63411">
    <property type="entry name" value="LuxS/MPP-like metallohydrolase"/>
    <property type="match status" value="2"/>
</dbReference>
<gene>
    <name type="primary">QCR2</name>
    <name type="ordered locus">KLLA0B03564g</name>
</gene>
<evidence type="ECO:0000250" key="1"/>
<evidence type="ECO:0000250" key="2">
    <source>
        <dbReference type="UniProtKB" id="P07257"/>
    </source>
</evidence>
<evidence type="ECO:0000305" key="3"/>